<organism>
    <name type="scientific">Yersinia pestis bv. Antiqua (strain Angola)</name>
    <dbReference type="NCBI Taxonomy" id="349746"/>
    <lineage>
        <taxon>Bacteria</taxon>
        <taxon>Pseudomonadati</taxon>
        <taxon>Pseudomonadota</taxon>
        <taxon>Gammaproteobacteria</taxon>
        <taxon>Enterobacterales</taxon>
        <taxon>Yersiniaceae</taxon>
        <taxon>Yersinia</taxon>
    </lineage>
</organism>
<protein>
    <recommendedName>
        <fullName evidence="1">Ribonuclease H</fullName>
        <shortName evidence="1">RNase H</shortName>
        <ecNumber evidence="1">3.1.26.4</ecNumber>
    </recommendedName>
</protein>
<keyword id="KW-0963">Cytoplasm</keyword>
<keyword id="KW-0255">Endonuclease</keyword>
<keyword id="KW-0378">Hydrolase</keyword>
<keyword id="KW-0460">Magnesium</keyword>
<keyword id="KW-0479">Metal-binding</keyword>
<keyword id="KW-0540">Nuclease</keyword>
<name>RNH_YERPG</name>
<comment type="function">
    <text evidence="1">Endonuclease that specifically degrades the RNA of RNA-DNA hybrids.</text>
</comment>
<comment type="catalytic activity">
    <reaction evidence="1">
        <text>Endonucleolytic cleavage to 5'-phosphomonoester.</text>
        <dbReference type="EC" id="3.1.26.4"/>
    </reaction>
</comment>
<comment type="cofactor">
    <cofactor evidence="1">
        <name>Mg(2+)</name>
        <dbReference type="ChEBI" id="CHEBI:18420"/>
    </cofactor>
    <text evidence="1">Binds 1 Mg(2+) ion per subunit. May bind a second metal ion at a regulatory site, or after substrate binding.</text>
</comment>
<comment type="subunit">
    <text evidence="1">Monomer.</text>
</comment>
<comment type="subcellular location">
    <subcellularLocation>
        <location evidence="1">Cytoplasm</location>
    </subcellularLocation>
</comment>
<comment type="similarity">
    <text evidence="1">Belongs to the RNase H family.</text>
</comment>
<gene>
    <name evidence="1" type="primary">rnhA</name>
    <name type="ordered locus">YpAngola_A2683</name>
</gene>
<feature type="chain" id="PRO_1000090925" description="Ribonuclease H">
    <location>
        <begin position="1"/>
        <end position="154"/>
    </location>
</feature>
<feature type="domain" description="RNase H type-1" evidence="2">
    <location>
        <begin position="1"/>
        <end position="142"/>
    </location>
</feature>
<feature type="binding site" evidence="1">
    <location>
        <position position="10"/>
    </location>
    <ligand>
        <name>Mg(2+)</name>
        <dbReference type="ChEBI" id="CHEBI:18420"/>
        <label>1</label>
    </ligand>
</feature>
<feature type="binding site" evidence="1">
    <location>
        <position position="10"/>
    </location>
    <ligand>
        <name>Mg(2+)</name>
        <dbReference type="ChEBI" id="CHEBI:18420"/>
        <label>2</label>
    </ligand>
</feature>
<feature type="binding site" evidence="1">
    <location>
        <position position="48"/>
    </location>
    <ligand>
        <name>Mg(2+)</name>
        <dbReference type="ChEBI" id="CHEBI:18420"/>
        <label>1</label>
    </ligand>
</feature>
<feature type="binding site" evidence="1">
    <location>
        <position position="70"/>
    </location>
    <ligand>
        <name>Mg(2+)</name>
        <dbReference type="ChEBI" id="CHEBI:18420"/>
        <label>1</label>
    </ligand>
</feature>
<feature type="binding site" evidence="1">
    <location>
        <position position="134"/>
    </location>
    <ligand>
        <name>Mg(2+)</name>
        <dbReference type="ChEBI" id="CHEBI:18420"/>
        <label>2</label>
    </ligand>
</feature>
<reference key="1">
    <citation type="journal article" date="2010" name="J. Bacteriol.">
        <title>Genome sequence of the deep-rooted Yersinia pestis strain Angola reveals new insights into the evolution and pangenome of the plague bacterium.</title>
        <authorList>
            <person name="Eppinger M."/>
            <person name="Worsham P.L."/>
            <person name="Nikolich M.P."/>
            <person name="Riley D.R."/>
            <person name="Sebastian Y."/>
            <person name="Mou S."/>
            <person name="Achtman M."/>
            <person name="Lindler L.E."/>
            <person name="Ravel J."/>
        </authorList>
    </citation>
    <scope>NUCLEOTIDE SEQUENCE [LARGE SCALE GENOMIC DNA]</scope>
    <source>
        <strain>Angola</strain>
    </source>
</reference>
<sequence length="154" mass="17464">MTKQVEIFTDGSCLGNPGPGGYGAILRYKQHEKTFSAGYYLTTNNRMELMAAIVALEALTSPCEVTLSTDSQYVRQGITQWIHNWKKRGWKTADRKPVRNVDLWQRLDLAIQSHTIQWEWVKGHAGHPENERCDELARQGANSPTLDDTGYNPD</sequence>
<dbReference type="EC" id="3.1.26.4" evidence="1"/>
<dbReference type="EMBL" id="CP000901">
    <property type="protein sequence ID" value="ABX86371.1"/>
    <property type="molecule type" value="Genomic_DNA"/>
</dbReference>
<dbReference type="RefSeq" id="WP_002210699.1">
    <property type="nucleotide sequence ID" value="NZ_CP009935.1"/>
</dbReference>
<dbReference type="SMR" id="A9R0G0"/>
<dbReference type="GeneID" id="57977475"/>
<dbReference type="KEGG" id="ypg:YpAngola_A2683"/>
<dbReference type="PATRIC" id="fig|349746.12.peg.3712"/>
<dbReference type="GO" id="GO:0005737">
    <property type="term" value="C:cytoplasm"/>
    <property type="evidence" value="ECO:0007669"/>
    <property type="project" value="UniProtKB-SubCell"/>
</dbReference>
<dbReference type="GO" id="GO:0000287">
    <property type="term" value="F:magnesium ion binding"/>
    <property type="evidence" value="ECO:0007669"/>
    <property type="project" value="UniProtKB-UniRule"/>
</dbReference>
<dbReference type="GO" id="GO:0003676">
    <property type="term" value="F:nucleic acid binding"/>
    <property type="evidence" value="ECO:0007669"/>
    <property type="project" value="InterPro"/>
</dbReference>
<dbReference type="GO" id="GO:0004523">
    <property type="term" value="F:RNA-DNA hybrid ribonuclease activity"/>
    <property type="evidence" value="ECO:0007669"/>
    <property type="project" value="UniProtKB-UniRule"/>
</dbReference>
<dbReference type="GO" id="GO:0043137">
    <property type="term" value="P:DNA replication, removal of RNA primer"/>
    <property type="evidence" value="ECO:0007669"/>
    <property type="project" value="TreeGrafter"/>
</dbReference>
<dbReference type="CDD" id="cd09278">
    <property type="entry name" value="RNase_HI_prokaryote_like"/>
    <property type="match status" value="1"/>
</dbReference>
<dbReference type="FunFam" id="3.30.420.10:FF:000008">
    <property type="entry name" value="Ribonuclease H"/>
    <property type="match status" value="1"/>
</dbReference>
<dbReference type="Gene3D" id="3.30.420.10">
    <property type="entry name" value="Ribonuclease H-like superfamily/Ribonuclease H"/>
    <property type="match status" value="1"/>
</dbReference>
<dbReference type="HAMAP" id="MF_00042">
    <property type="entry name" value="RNase_H"/>
    <property type="match status" value="1"/>
</dbReference>
<dbReference type="InterPro" id="IPR050092">
    <property type="entry name" value="RNase_H"/>
</dbReference>
<dbReference type="InterPro" id="IPR012337">
    <property type="entry name" value="RNaseH-like_sf"/>
</dbReference>
<dbReference type="InterPro" id="IPR002156">
    <property type="entry name" value="RNaseH_domain"/>
</dbReference>
<dbReference type="InterPro" id="IPR036397">
    <property type="entry name" value="RNaseH_sf"/>
</dbReference>
<dbReference type="InterPro" id="IPR022892">
    <property type="entry name" value="RNaseHI"/>
</dbReference>
<dbReference type="NCBIfam" id="NF001236">
    <property type="entry name" value="PRK00203.1"/>
    <property type="match status" value="1"/>
</dbReference>
<dbReference type="PANTHER" id="PTHR10642">
    <property type="entry name" value="RIBONUCLEASE H1"/>
    <property type="match status" value="1"/>
</dbReference>
<dbReference type="PANTHER" id="PTHR10642:SF26">
    <property type="entry name" value="RIBONUCLEASE H1"/>
    <property type="match status" value="1"/>
</dbReference>
<dbReference type="Pfam" id="PF00075">
    <property type="entry name" value="RNase_H"/>
    <property type="match status" value="1"/>
</dbReference>
<dbReference type="SUPFAM" id="SSF53098">
    <property type="entry name" value="Ribonuclease H-like"/>
    <property type="match status" value="1"/>
</dbReference>
<dbReference type="PROSITE" id="PS50879">
    <property type="entry name" value="RNASE_H_1"/>
    <property type="match status" value="1"/>
</dbReference>
<accession>A9R0G0</accession>
<evidence type="ECO:0000255" key="1">
    <source>
        <dbReference type="HAMAP-Rule" id="MF_00042"/>
    </source>
</evidence>
<evidence type="ECO:0000255" key="2">
    <source>
        <dbReference type="PROSITE-ProRule" id="PRU00408"/>
    </source>
</evidence>
<proteinExistence type="inferred from homology"/>